<protein>
    <recommendedName>
        <fullName evidence="1">Tagatose-6-phosphate kinase</fullName>
        <ecNumber evidence="1">2.7.1.144</ecNumber>
    </recommendedName>
    <alternativeName>
        <fullName evidence="1">Phosphotagatokinase</fullName>
    </alternativeName>
</protein>
<keyword id="KW-0067">ATP-binding</keyword>
<keyword id="KW-0418">Kinase</keyword>
<keyword id="KW-0423">Lactose metabolism</keyword>
<keyword id="KW-0547">Nucleotide-binding</keyword>
<keyword id="KW-0808">Transferase</keyword>
<evidence type="ECO:0000255" key="1">
    <source>
        <dbReference type="HAMAP-Rule" id="MF_01557"/>
    </source>
</evidence>
<gene>
    <name evidence="1" type="primary">lacC</name>
    <name type="ordered locus">SpyM51611</name>
</gene>
<comment type="catalytic activity">
    <reaction evidence="1">
        <text>D-tagatofuranose 6-phosphate + ATP = D-tagatofuranose 1,6-bisphosphate + ADP + H(+)</text>
        <dbReference type="Rhea" id="RHEA:12420"/>
        <dbReference type="ChEBI" id="CHEBI:15378"/>
        <dbReference type="ChEBI" id="CHEBI:30616"/>
        <dbReference type="ChEBI" id="CHEBI:58694"/>
        <dbReference type="ChEBI" id="CHEBI:58695"/>
        <dbReference type="ChEBI" id="CHEBI:456216"/>
        <dbReference type="EC" id="2.7.1.144"/>
    </reaction>
</comment>
<comment type="pathway">
    <text evidence="1">Carbohydrate metabolism; D-tagatose 6-phosphate degradation; D-glyceraldehyde 3-phosphate and glycerone phosphate from D-tagatose 6-phosphate: step 1/2.</text>
</comment>
<comment type="similarity">
    <text evidence="1">Belongs to the carbohydrate kinase PfkB family. LacC subfamily.</text>
</comment>
<dbReference type="EC" id="2.7.1.144" evidence="1"/>
<dbReference type="EMBL" id="AM295007">
    <property type="protein sequence ID" value="CAM30932.1"/>
    <property type="molecule type" value="Genomic_DNA"/>
</dbReference>
<dbReference type="RefSeq" id="WP_011889151.1">
    <property type="nucleotide sequence ID" value="NC_009332.1"/>
</dbReference>
<dbReference type="SMR" id="A2RGF2"/>
<dbReference type="KEGG" id="spf:SpyM51611"/>
<dbReference type="HOGENOM" id="CLU_050013_5_0_9"/>
<dbReference type="UniPathway" id="UPA00704">
    <property type="reaction ID" value="UER00715"/>
</dbReference>
<dbReference type="GO" id="GO:0005829">
    <property type="term" value="C:cytosol"/>
    <property type="evidence" value="ECO:0007669"/>
    <property type="project" value="TreeGrafter"/>
</dbReference>
<dbReference type="GO" id="GO:0005524">
    <property type="term" value="F:ATP binding"/>
    <property type="evidence" value="ECO:0007669"/>
    <property type="project" value="UniProtKB-KW"/>
</dbReference>
<dbReference type="GO" id="GO:0008443">
    <property type="term" value="F:phosphofructokinase activity"/>
    <property type="evidence" value="ECO:0007669"/>
    <property type="project" value="TreeGrafter"/>
</dbReference>
<dbReference type="GO" id="GO:0009024">
    <property type="term" value="F:tagatose-6-phosphate kinase activity"/>
    <property type="evidence" value="ECO:0007669"/>
    <property type="project" value="UniProtKB-UniRule"/>
</dbReference>
<dbReference type="GO" id="GO:2001059">
    <property type="term" value="P:D-tagatose 6-phosphate catabolic process"/>
    <property type="evidence" value="ECO:0007669"/>
    <property type="project" value="UniProtKB-UniRule"/>
</dbReference>
<dbReference type="GO" id="GO:0019512">
    <property type="term" value="P:lactose catabolic process via tagatose-6-phosphate"/>
    <property type="evidence" value="ECO:0007669"/>
    <property type="project" value="InterPro"/>
</dbReference>
<dbReference type="CDD" id="cd01164">
    <property type="entry name" value="FruK_PfkB_like"/>
    <property type="match status" value="1"/>
</dbReference>
<dbReference type="FunFam" id="3.40.1190.20:FF:000001">
    <property type="entry name" value="Phosphofructokinase"/>
    <property type="match status" value="1"/>
</dbReference>
<dbReference type="Gene3D" id="3.40.1190.20">
    <property type="match status" value="1"/>
</dbReference>
<dbReference type="HAMAP" id="MF_01557">
    <property type="entry name" value="LacC"/>
    <property type="match status" value="1"/>
</dbReference>
<dbReference type="InterPro" id="IPR005926">
    <property type="entry name" value="LacC"/>
</dbReference>
<dbReference type="InterPro" id="IPR011611">
    <property type="entry name" value="PfkB_dom"/>
</dbReference>
<dbReference type="InterPro" id="IPR029056">
    <property type="entry name" value="Ribokinase-like"/>
</dbReference>
<dbReference type="InterPro" id="IPR017583">
    <property type="entry name" value="Tagatose/fructose_Pkinase"/>
</dbReference>
<dbReference type="NCBIfam" id="TIGR03168">
    <property type="entry name" value="1-PFK"/>
    <property type="match status" value="1"/>
</dbReference>
<dbReference type="NCBIfam" id="TIGR01231">
    <property type="entry name" value="lacC"/>
    <property type="match status" value="1"/>
</dbReference>
<dbReference type="NCBIfam" id="NF010033">
    <property type="entry name" value="PRK13508.1"/>
    <property type="match status" value="1"/>
</dbReference>
<dbReference type="PANTHER" id="PTHR46566:SF5">
    <property type="entry name" value="1-PHOSPHOFRUCTOKINASE"/>
    <property type="match status" value="1"/>
</dbReference>
<dbReference type="PANTHER" id="PTHR46566">
    <property type="entry name" value="1-PHOSPHOFRUCTOKINASE-RELATED"/>
    <property type="match status" value="1"/>
</dbReference>
<dbReference type="Pfam" id="PF00294">
    <property type="entry name" value="PfkB"/>
    <property type="match status" value="1"/>
</dbReference>
<dbReference type="PIRSF" id="PIRSF000535">
    <property type="entry name" value="1PFK/6PFK/LacC"/>
    <property type="match status" value="1"/>
</dbReference>
<dbReference type="SUPFAM" id="SSF53613">
    <property type="entry name" value="Ribokinase-like"/>
    <property type="match status" value="1"/>
</dbReference>
<reference key="1">
    <citation type="journal article" date="2007" name="J. Bacteriol.">
        <title>Complete genome of acute rheumatic fever-associated serotype M5 Streptococcus pyogenes strain Manfredo.</title>
        <authorList>
            <person name="Holden M.T.G."/>
            <person name="Scott A."/>
            <person name="Cherevach I."/>
            <person name="Chillingworth T."/>
            <person name="Churcher C."/>
            <person name="Cronin A."/>
            <person name="Dowd L."/>
            <person name="Feltwell T."/>
            <person name="Hamlin N."/>
            <person name="Holroyd S."/>
            <person name="Jagels K."/>
            <person name="Moule S."/>
            <person name="Mungall K."/>
            <person name="Quail M.A."/>
            <person name="Price C."/>
            <person name="Rabbinowitsch E."/>
            <person name="Sharp S."/>
            <person name="Skelton J."/>
            <person name="Whitehead S."/>
            <person name="Barrell B.G."/>
            <person name="Kehoe M."/>
            <person name="Parkhill J."/>
        </authorList>
    </citation>
    <scope>NUCLEOTIDE SEQUENCE [LARGE SCALE GENOMIC DNA]</scope>
    <source>
        <strain>Manfredo</strain>
    </source>
</reference>
<feature type="chain" id="PRO_1000068943" description="Tagatose-6-phosphate kinase">
    <location>
        <begin position="1"/>
        <end position="309"/>
    </location>
</feature>
<accession>A2RGF2</accession>
<sequence length="309" mass="33474">MILTVTLNPAIDVSYPLDELKCDTVNRVVDVTKTPGGKGLNVCRVLNDFGETVKATGCIGGESGDFIINHLPDSILSRFYKISGDTRTCIVILHEGNQTEILEKGPLLSVEEIDGFTHHFKYLLNDVDVVTLSGSLPAGMPDDYYQKLIGIANLNGKKTVLDCSGNALEAVLKGDSKPTVIKPNLEELSQLLGKEMTKDFEALKEVLQDELFEGIEWIIVSLGADGVFAKHNDTFYNVDIPKIEIVSAVGSGDSTVAGIASGLANDEDDRALLTKANVLGMLNAQEKTTGHVNMANYDKLYQSIKVKEV</sequence>
<name>LACC_STRPG</name>
<organism>
    <name type="scientific">Streptococcus pyogenes serotype M5 (strain Manfredo)</name>
    <dbReference type="NCBI Taxonomy" id="160491"/>
    <lineage>
        <taxon>Bacteria</taxon>
        <taxon>Bacillati</taxon>
        <taxon>Bacillota</taxon>
        <taxon>Bacilli</taxon>
        <taxon>Lactobacillales</taxon>
        <taxon>Streptococcaceae</taxon>
        <taxon>Streptococcus</taxon>
    </lineage>
</organism>
<proteinExistence type="inferred from homology"/>